<sequence length="279" mass="31257">MSALEWYAHKSLGDGIFWIQERFYESGNRANIWLVRGSEQDVVIDTGLGLRSLPEYLYSSGLLRDRAARDNAACRPLLAVATHVHFDHSGGLYQFDRVAVHHAEAEALARGDNFETVTWLSDSEVVRAPSPGWRARQFRVQAVQPTLVLQDGDVINLGDRQLTVMHMPGHSRGSICLHDKDRKILFSGDVVYDGSLIDWLPYSRISDYVGTCERLIELVDRGLVEKVLPGHFNTFGAERLFRLASNYISKAGICHKVSTFAMRSLASLALRVTNSRTSP</sequence>
<gene>
    <name type="primary">MBLAC2</name>
</gene>
<name>MBLC2_BOVIN</name>
<feature type="initiator methionine" description="Removed" evidence="2">
    <location>
        <position position="1"/>
    </location>
</feature>
<feature type="chain" id="PRO_0000325934" description="Acyl-coenzyme A thioesterase MBLAC2">
    <location>
        <begin position="2"/>
        <end position="279"/>
    </location>
</feature>
<feature type="binding site" evidence="1">
    <location>
        <position position="83"/>
    </location>
    <ligand>
        <name>Zn(2+)</name>
        <dbReference type="ChEBI" id="CHEBI:29105"/>
        <label>1</label>
    </ligand>
</feature>
<feature type="binding site" evidence="1">
    <location>
        <position position="85"/>
    </location>
    <ligand>
        <name>Zn(2+)</name>
        <dbReference type="ChEBI" id="CHEBI:29105"/>
        <label>1</label>
    </ligand>
</feature>
<feature type="binding site" evidence="2">
    <location>
        <position position="87"/>
    </location>
    <ligand>
        <name>Zn(2+)</name>
        <dbReference type="ChEBI" id="CHEBI:29105"/>
        <label>2</label>
    </ligand>
</feature>
<feature type="binding site" evidence="2">
    <location>
        <position position="88"/>
    </location>
    <ligand>
        <name>Zn(2+)</name>
        <dbReference type="ChEBI" id="CHEBI:29105"/>
        <label>2</label>
    </ligand>
</feature>
<feature type="binding site" evidence="1">
    <location>
        <position position="170"/>
    </location>
    <ligand>
        <name>Zn(2+)</name>
        <dbReference type="ChEBI" id="CHEBI:29105"/>
        <label>1</label>
    </ligand>
</feature>
<feature type="binding site" evidence="1">
    <location>
        <position position="189"/>
    </location>
    <ligand>
        <name>Zn(2+)</name>
        <dbReference type="ChEBI" id="CHEBI:29105"/>
        <label>1</label>
    </ligand>
</feature>
<feature type="binding site" evidence="1">
    <location>
        <position position="189"/>
    </location>
    <ligand>
        <name>Zn(2+)</name>
        <dbReference type="ChEBI" id="CHEBI:29105"/>
        <label>2</label>
    </ligand>
</feature>
<feature type="binding site" evidence="1">
    <location>
        <position position="231"/>
    </location>
    <ligand>
        <name>Zn(2+)</name>
        <dbReference type="ChEBI" id="CHEBI:29105"/>
        <label>2</label>
    </ligand>
</feature>
<feature type="modified residue" description="N-acetylserine" evidence="2">
    <location>
        <position position="2"/>
    </location>
</feature>
<feature type="lipid moiety-binding region" description="S-palmitoyl cysteine" evidence="2">
    <location>
        <position position="254"/>
    </location>
</feature>
<accession>A5PJT0</accession>
<comment type="function">
    <text evidence="2">Acyl-CoA thioesterases are a group of enzymes that catalyze the hydrolysis of acyl-CoAs to the free fatty acid and coenzyme A (CoASH), providing the potential to regulate intracellular levels of acyl-CoAs, free fatty acids and CoASH. Has an acyl-CoA thioesterase activity towards the long chain fatty acyl-CoA thioester palmitoyl-CoA (hexadecanoyl-CoA; C16:0-CoA). Displays a substrate preference for fatty acyl-CoAs with chain-lengths C12-C18.</text>
</comment>
<comment type="catalytic activity">
    <reaction evidence="2">
        <text>hexadecanoyl-CoA + H2O = hexadecanoate + CoA + H(+)</text>
        <dbReference type="Rhea" id="RHEA:16645"/>
        <dbReference type="ChEBI" id="CHEBI:7896"/>
        <dbReference type="ChEBI" id="CHEBI:15377"/>
        <dbReference type="ChEBI" id="CHEBI:15378"/>
        <dbReference type="ChEBI" id="CHEBI:57287"/>
        <dbReference type="ChEBI" id="CHEBI:57379"/>
        <dbReference type="EC" id="3.1.2.2"/>
    </reaction>
</comment>
<comment type="catalytic activity">
    <reaction evidence="2">
        <text>dodecanoyl-CoA + H2O = dodecanoate + CoA + H(+)</text>
        <dbReference type="Rhea" id="RHEA:30135"/>
        <dbReference type="ChEBI" id="CHEBI:15377"/>
        <dbReference type="ChEBI" id="CHEBI:15378"/>
        <dbReference type="ChEBI" id="CHEBI:18262"/>
        <dbReference type="ChEBI" id="CHEBI:57287"/>
        <dbReference type="ChEBI" id="CHEBI:57375"/>
    </reaction>
    <physiologicalReaction direction="left-to-right" evidence="2">
        <dbReference type="Rhea" id="RHEA:30136"/>
    </physiologicalReaction>
</comment>
<comment type="catalytic activity">
    <reaction evidence="2">
        <text>tetradecanoyl-CoA + H2O = tetradecanoate + CoA + H(+)</text>
        <dbReference type="Rhea" id="RHEA:40119"/>
        <dbReference type="ChEBI" id="CHEBI:15377"/>
        <dbReference type="ChEBI" id="CHEBI:15378"/>
        <dbReference type="ChEBI" id="CHEBI:30807"/>
        <dbReference type="ChEBI" id="CHEBI:57287"/>
        <dbReference type="ChEBI" id="CHEBI:57385"/>
    </reaction>
    <physiologicalReaction direction="left-to-right" evidence="2">
        <dbReference type="Rhea" id="RHEA:40120"/>
    </physiologicalReaction>
</comment>
<comment type="catalytic activity">
    <reaction evidence="2">
        <text>octadecanoyl-CoA + H2O = octadecanoate + CoA + H(+)</text>
        <dbReference type="Rhea" id="RHEA:30139"/>
        <dbReference type="ChEBI" id="CHEBI:15377"/>
        <dbReference type="ChEBI" id="CHEBI:15378"/>
        <dbReference type="ChEBI" id="CHEBI:25629"/>
        <dbReference type="ChEBI" id="CHEBI:57287"/>
        <dbReference type="ChEBI" id="CHEBI:57394"/>
    </reaction>
    <physiologicalReaction direction="left-to-right" evidence="2">
        <dbReference type="Rhea" id="RHEA:30140"/>
    </physiologicalReaction>
</comment>
<comment type="catalytic activity">
    <reaction evidence="2">
        <text>a beta-lactam + H2O = a substituted beta-amino acid</text>
        <dbReference type="Rhea" id="RHEA:20401"/>
        <dbReference type="ChEBI" id="CHEBI:15377"/>
        <dbReference type="ChEBI" id="CHEBI:35627"/>
        <dbReference type="ChEBI" id="CHEBI:140347"/>
        <dbReference type="EC" id="3.5.2.6"/>
    </reaction>
</comment>
<comment type="cofactor">
    <cofactor evidence="2">
        <name>Zn(2+)</name>
        <dbReference type="ChEBI" id="CHEBI:29105"/>
    </cofactor>
    <text evidence="2">Binds 2 Zn(2+) ions per subunit.</text>
</comment>
<comment type="subcellular location">
    <subcellularLocation>
        <location evidence="2">Endoplasmic reticulum membrane</location>
        <topology evidence="2">Lipid-anchor</topology>
    </subcellularLocation>
    <subcellularLocation>
        <location evidence="2">Cell membrane</location>
        <topology evidence="2">Lipid-anchor</topology>
    </subcellularLocation>
</comment>
<comment type="PTM">
    <text evidence="2">Palmitoylated on Cys-254 by ZDHHC20.</text>
</comment>
<comment type="similarity">
    <text evidence="3">Belongs to the metallo-beta-lactamase superfamily. Glyoxalase II family.</text>
</comment>
<keyword id="KW-0007">Acetylation</keyword>
<keyword id="KW-1003">Cell membrane</keyword>
<keyword id="KW-0256">Endoplasmic reticulum</keyword>
<keyword id="KW-0276">Fatty acid metabolism</keyword>
<keyword id="KW-0378">Hydrolase</keyword>
<keyword id="KW-0443">Lipid metabolism</keyword>
<keyword id="KW-0449">Lipoprotein</keyword>
<keyword id="KW-0472">Membrane</keyword>
<keyword id="KW-0479">Metal-binding</keyword>
<keyword id="KW-0564">Palmitate</keyword>
<keyword id="KW-1185">Reference proteome</keyword>
<keyword id="KW-0862">Zinc</keyword>
<protein>
    <recommendedName>
        <fullName>Acyl-coenzyme A thioesterase MBLAC2</fullName>
        <shortName>Acyl-CoA thioesterase MBLAC2</shortName>
        <ecNumber evidence="2">3.1.2.2</ecNumber>
    </recommendedName>
    <alternativeName>
        <fullName>Beta-lactamase MBLAC2</fullName>
        <ecNumber evidence="2">3.5.2.6</ecNumber>
    </alternativeName>
    <alternativeName>
        <fullName>Metallo-beta-lactamase domain-containing protein 2</fullName>
    </alternativeName>
    <alternativeName>
        <fullName>Palmitoyl-coenzyme A thioesterase MBLAC2</fullName>
    </alternativeName>
</protein>
<reference key="1">
    <citation type="submission" date="2007-06" db="EMBL/GenBank/DDBJ databases">
        <authorList>
            <consortium name="NIH - Mammalian Gene Collection (MGC) project"/>
        </authorList>
    </citation>
    <scope>NUCLEOTIDE SEQUENCE [LARGE SCALE MRNA]</scope>
    <source>
        <strain>Hereford</strain>
        <tissue>Hypothalamus</tissue>
    </source>
</reference>
<dbReference type="EC" id="3.1.2.2" evidence="2"/>
<dbReference type="EC" id="3.5.2.6" evidence="2"/>
<dbReference type="EMBL" id="BC142228">
    <property type="protein sequence ID" value="AAI42229.1"/>
    <property type="molecule type" value="mRNA"/>
</dbReference>
<dbReference type="RefSeq" id="NP_001092549.1">
    <property type="nucleotide sequence ID" value="NM_001099079.2"/>
</dbReference>
<dbReference type="SMR" id="A5PJT0"/>
<dbReference type="FunCoup" id="A5PJT0">
    <property type="interactions" value="548"/>
</dbReference>
<dbReference type="STRING" id="9913.ENSBTAP00000018096"/>
<dbReference type="SwissPalm" id="A5PJT0"/>
<dbReference type="PaxDb" id="9913-ENSBTAP00000018096"/>
<dbReference type="Ensembl" id="ENSBTAT00000018096.4">
    <property type="protein sequence ID" value="ENSBTAP00000018096.3"/>
    <property type="gene ID" value="ENSBTAG00000013612.4"/>
</dbReference>
<dbReference type="GeneID" id="537692"/>
<dbReference type="KEGG" id="bta:537692"/>
<dbReference type="CTD" id="153364"/>
<dbReference type="VEuPathDB" id="HostDB:ENSBTAG00000013612"/>
<dbReference type="VGNC" id="VGNC:31282">
    <property type="gene designation" value="MBLAC2"/>
</dbReference>
<dbReference type="eggNOG" id="KOG0813">
    <property type="taxonomic scope" value="Eukaryota"/>
</dbReference>
<dbReference type="GeneTree" id="ENSGT00390000017819"/>
<dbReference type="HOGENOM" id="CLU_030571_0_2_1"/>
<dbReference type="InParanoid" id="A5PJT0"/>
<dbReference type="OMA" id="VASHTHF"/>
<dbReference type="OrthoDB" id="17458at2759"/>
<dbReference type="TreeFam" id="TF319889"/>
<dbReference type="Proteomes" id="UP000009136">
    <property type="component" value="Chromosome 7"/>
</dbReference>
<dbReference type="Bgee" id="ENSBTAG00000013612">
    <property type="expression patterns" value="Expressed in occipital lobe and 103 other cell types or tissues"/>
</dbReference>
<dbReference type="GO" id="GO:0005789">
    <property type="term" value="C:endoplasmic reticulum membrane"/>
    <property type="evidence" value="ECO:0007669"/>
    <property type="project" value="UniProtKB-SubCell"/>
</dbReference>
<dbReference type="GO" id="GO:0005886">
    <property type="term" value="C:plasma membrane"/>
    <property type="evidence" value="ECO:0007669"/>
    <property type="project" value="UniProtKB-SubCell"/>
</dbReference>
<dbReference type="GO" id="GO:0008800">
    <property type="term" value="F:beta-lactamase activity"/>
    <property type="evidence" value="ECO:0000250"/>
    <property type="project" value="UniProtKB"/>
</dbReference>
<dbReference type="GO" id="GO:0052816">
    <property type="term" value="F:long-chain fatty acyl-CoA hydrolase activity"/>
    <property type="evidence" value="ECO:0007669"/>
    <property type="project" value="Ensembl"/>
</dbReference>
<dbReference type="GO" id="GO:0046872">
    <property type="term" value="F:metal ion binding"/>
    <property type="evidence" value="ECO:0007669"/>
    <property type="project" value="UniProtKB-KW"/>
</dbReference>
<dbReference type="GO" id="GO:0006631">
    <property type="term" value="P:fatty acid metabolic process"/>
    <property type="evidence" value="ECO:0007669"/>
    <property type="project" value="UniProtKB-KW"/>
</dbReference>
<dbReference type="CDD" id="cd07712">
    <property type="entry name" value="MBLAC2-like_MBL-fold"/>
    <property type="match status" value="1"/>
</dbReference>
<dbReference type="FunFam" id="3.60.15.10:FF:000026">
    <property type="entry name" value="metallo-beta-lactamase domain-containing protein 2"/>
    <property type="match status" value="1"/>
</dbReference>
<dbReference type="Gene3D" id="3.60.15.10">
    <property type="entry name" value="Ribonuclease Z/Hydroxyacylglutathione hydrolase-like"/>
    <property type="match status" value="1"/>
</dbReference>
<dbReference type="InterPro" id="IPR001279">
    <property type="entry name" value="Metallo-B-lactamas"/>
</dbReference>
<dbReference type="InterPro" id="IPR050855">
    <property type="entry name" value="NDM-1-like"/>
</dbReference>
<dbReference type="InterPro" id="IPR036866">
    <property type="entry name" value="RibonucZ/Hydroxyglut_hydro"/>
</dbReference>
<dbReference type="PANTHER" id="PTHR42951:SF4">
    <property type="entry name" value="ACYL-COENZYME A THIOESTERASE MBLAC2"/>
    <property type="match status" value="1"/>
</dbReference>
<dbReference type="PANTHER" id="PTHR42951">
    <property type="entry name" value="METALLO-BETA-LACTAMASE DOMAIN-CONTAINING"/>
    <property type="match status" value="1"/>
</dbReference>
<dbReference type="Pfam" id="PF00753">
    <property type="entry name" value="Lactamase_B"/>
    <property type="match status" value="1"/>
</dbReference>
<dbReference type="SMART" id="SM00849">
    <property type="entry name" value="Lactamase_B"/>
    <property type="match status" value="1"/>
</dbReference>
<dbReference type="SUPFAM" id="SSF56281">
    <property type="entry name" value="Metallo-hydrolase/oxidoreductase"/>
    <property type="match status" value="1"/>
</dbReference>
<organism>
    <name type="scientific">Bos taurus</name>
    <name type="common">Bovine</name>
    <dbReference type="NCBI Taxonomy" id="9913"/>
    <lineage>
        <taxon>Eukaryota</taxon>
        <taxon>Metazoa</taxon>
        <taxon>Chordata</taxon>
        <taxon>Craniata</taxon>
        <taxon>Vertebrata</taxon>
        <taxon>Euteleostomi</taxon>
        <taxon>Mammalia</taxon>
        <taxon>Eutheria</taxon>
        <taxon>Laurasiatheria</taxon>
        <taxon>Artiodactyla</taxon>
        <taxon>Ruminantia</taxon>
        <taxon>Pecora</taxon>
        <taxon>Bovidae</taxon>
        <taxon>Bovinae</taxon>
        <taxon>Bos</taxon>
    </lineage>
</organism>
<proteinExistence type="evidence at transcript level"/>
<evidence type="ECO:0000250" key="1"/>
<evidence type="ECO:0000250" key="2">
    <source>
        <dbReference type="UniProtKB" id="Q68D91"/>
    </source>
</evidence>
<evidence type="ECO:0000305" key="3"/>